<comment type="function">
    <text evidence="1">Non-mitochondrial 3-hydroxy-3-methylglutaryl-CoA lyase that catalyzes a cation-dependent cleavage of (S)-3-hydroxy-3-methylglutaryl-CoA into acetyl-CoA and acetoacetate, a key step in ketogenesis, the products of which support energy production in nonhepatic animal tissues.</text>
</comment>
<comment type="catalytic activity">
    <reaction>
        <text>(3S)-3-hydroxy-3-methylglutaryl-CoA = acetoacetate + acetyl-CoA</text>
        <dbReference type="Rhea" id="RHEA:24404"/>
        <dbReference type="ChEBI" id="CHEBI:13705"/>
        <dbReference type="ChEBI" id="CHEBI:43074"/>
        <dbReference type="ChEBI" id="CHEBI:57288"/>
        <dbReference type="EC" id="4.1.3.4"/>
    </reaction>
</comment>
<comment type="cofactor">
    <cofactor evidence="1">
        <name>a divalent metal cation</name>
        <dbReference type="ChEBI" id="CHEBI:60240"/>
    </cofactor>
</comment>
<comment type="pathway">
    <text>Metabolic intermediate metabolism; (S)-3-hydroxy-3-methylglutaryl-CoA degradation; acetoacetate from (S)-3-hydroxy-3-methylglutaryl-CoA: step 1/1.</text>
</comment>
<comment type="subcellular location">
    <subcellularLocation>
        <location evidence="1">Cytoplasm</location>
        <location evidence="1">Cytosol</location>
    </subcellularLocation>
    <subcellularLocation>
        <location evidence="1">Endoplasmic reticulum membrane</location>
        <topology evidence="1">Peripheral membrane protein</topology>
    </subcellularLocation>
</comment>
<comment type="similarity">
    <text evidence="3">Belongs to the HMG-CoA lyase family.</text>
</comment>
<dbReference type="EC" id="4.1.3.4"/>
<dbReference type="EMBL" id="AK141622">
    <property type="protein sequence ID" value="BAE24772.1"/>
    <property type="molecule type" value="mRNA"/>
</dbReference>
<dbReference type="EMBL" id="BC037381">
    <property type="protein sequence ID" value="AAH37381.1"/>
    <property type="molecule type" value="mRNA"/>
</dbReference>
<dbReference type="CCDS" id="CCDS23349.1"/>
<dbReference type="RefSeq" id="NP_776092.1">
    <property type="nucleotide sequence ID" value="NM_173731.3"/>
</dbReference>
<dbReference type="SMR" id="Q8JZS7"/>
<dbReference type="FunCoup" id="Q8JZS7">
    <property type="interactions" value="942"/>
</dbReference>
<dbReference type="STRING" id="10090.ENSMUSP00000008052"/>
<dbReference type="iPTMnet" id="Q8JZS7"/>
<dbReference type="PhosphoSitePlus" id="Q8JZS7"/>
<dbReference type="jPOST" id="Q8JZS7"/>
<dbReference type="PaxDb" id="10090-ENSMUSP00000008052"/>
<dbReference type="ProteomicsDB" id="267054"/>
<dbReference type="Antibodypedia" id="31030">
    <property type="antibodies" value="53 antibodies from 13 providers"/>
</dbReference>
<dbReference type="DNASU" id="208982"/>
<dbReference type="Ensembl" id="ENSMUST00000008052.13">
    <property type="protein sequence ID" value="ENSMUSP00000008052.7"/>
    <property type="gene ID" value="ENSMUSG00000007908.15"/>
</dbReference>
<dbReference type="GeneID" id="208982"/>
<dbReference type="KEGG" id="mmu:208982"/>
<dbReference type="UCSC" id="uc009qsx.1">
    <property type="organism name" value="mouse"/>
</dbReference>
<dbReference type="AGR" id="MGI:2446108"/>
<dbReference type="CTD" id="54511"/>
<dbReference type="MGI" id="MGI:2446108">
    <property type="gene designation" value="Hmgcll1"/>
</dbReference>
<dbReference type="VEuPathDB" id="HostDB:ENSMUSG00000007908"/>
<dbReference type="eggNOG" id="KOG2368">
    <property type="taxonomic scope" value="Eukaryota"/>
</dbReference>
<dbReference type="GeneTree" id="ENSGT00940000159467"/>
<dbReference type="InParanoid" id="Q8JZS7"/>
<dbReference type="OMA" id="VATAWDC"/>
<dbReference type="OrthoDB" id="1905920at2759"/>
<dbReference type="PhylomeDB" id="Q8JZS7"/>
<dbReference type="TreeFam" id="TF105363"/>
<dbReference type="Reactome" id="R-MMU-77111">
    <property type="pathway name" value="Synthesis of Ketone Bodies"/>
</dbReference>
<dbReference type="UniPathway" id="UPA00896">
    <property type="reaction ID" value="UER00863"/>
</dbReference>
<dbReference type="BioGRID-ORCS" id="208982">
    <property type="hits" value="2 hits in 80 CRISPR screens"/>
</dbReference>
<dbReference type="ChiTaRS" id="Hmgcll1">
    <property type="organism name" value="mouse"/>
</dbReference>
<dbReference type="PRO" id="PR:Q8JZS7"/>
<dbReference type="Proteomes" id="UP000000589">
    <property type="component" value="Chromosome 9"/>
</dbReference>
<dbReference type="RNAct" id="Q8JZS7">
    <property type="molecule type" value="protein"/>
</dbReference>
<dbReference type="Bgee" id="ENSMUSG00000007908">
    <property type="expression patterns" value="Expressed in animal zygote and 111 other cell types or tissues"/>
</dbReference>
<dbReference type="ExpressionAtlas" id="Q8JZS7">
    <property type="expression patterns" value="baseline and differential"/>
</dbReference>
<dbReference type="GO" id="GO:0005829">
    <property type="term" value="C:cytosol"/>
    <property type="evidence" value="ECO:0000250"/>
    <property type="project" value="UniProtKB"/>
</dbReference>
<dbReference type="GO" id="GO:0005783">
    <property type="term" value="C:endoplasmic reticulum"/>
    <property type="evidence" value="ECO:0000250"/>
    <property type="project" value="UniProtKB"/>
</dbReference>
<dbReference type="GO" id="GO:0005789">
    <property type="term" value="C:endoplasmic reticulum membrane"/>
    <property type="evidence" value="ECO:0007669"/>
    <property type="project" value="UniProtKB-SubCell"/>
</dbReference>
<dbReference type="GO" id="GO:0016020">
    <property type="term" value="C:membrane"/>
    <property type="evidence" value="ECO:0000250"/>
    <property type="project" value="UniProtKB"/>
</dbReference>
<dbReference type="GO" id="GO:0048471">
    <property type="term" value="C:perinuclear region of cytoplasm"/>
    <property type="evidence" value="ECO:0000250"/>
    <property type="project" value="UniProtKB"/>
</dbReference>
<dbReference type="GO" id="GO:0004419">
    <property type="term" value="F:hydroxymethylglutaryl-CoA lyase activity"/>
    <property type="evidence" value="ECO:0000250"/>
    <property type="project" value="UniProtKB"/>
</dbReference>
<dbReference type="GO" id="GO:0046872">
    <property type="term" value="F:metal ion binding"/>
    <property type="evidence" value="ECO:0000250"/>
    <property type="project" value="UniProtKB"/>
</dbReference>
<dbReference type="GO" id="GO:0046951">
    <property type="term" value="P:ketone body biosynthetic process"/>
    <property type="evidence" value="ECO:0000250"/>
    <property type="project" value="UniProtKB"/>
</dbReference>
<dbReference type="CDD" id="cd07938">
    <property type="entry name" value="DRE_TIM_HMGL"/>
    <property type="match status" value="1"/>
</dbReference>
<dbReference type="FunFam" id="3.20.20.70:FF:000038">
    <property type="entry name" value="Hydroxymethylglutaryl-CoA lyase, mitochondrial"/>
    <property type="match status" value="1"/>
</dbReference>
<dbReference type="Gene3D" id="3.20.20.70">
    <property type="entry name" value="Aldolase class I"/>
    <property type="match status" value="1"/>
</dbReference>
<dbReference type="InterPro" id="IPR013785">
    <property type="entry name" value="Aldolase_TIM"/>
</dbReference>
<dbReference type="InterPro" id="IPR043594">
    <property type="entry name" value="HMGL"/>
</dbReference>
<dbReference type="InterPro" id="IPR000891">
    <property type="entry name" value="PYR_CT"/>
</dbReference>
<dbReference type="NCBIfam" id="NF004283">
    <property type="entry name" value="PRK05692.1"/>
    <property type="match status" value="1"/>
</dbReference>
<dbReference type="PANTHER" id="PTHR42738:SF5">
    <property type="entry name" value="3-HYDROXY-3-METHYLGLUTARYL-COA LYASE, CYTOPLASMIC"/>
    <property type="match status" value="1"/>
</dbReference>
<dbReference type="PANTHER" id="PTHR42738">
    <property type="entry name" value="HYDROXYMETHYLGLUTARYL-COA LYASE"/>
    <property type="match status" value="1"/>
</dbReference>
<dbReference type="Pfam" id="PF00682">
    <property type="entry name" value="HMGL-like"/>
    <property type="match status" value="1"/>
</dbReference>
<dbReference type="SUPFAM" id="SSF51569">
    <property type="entry name" value="Aldolase"/>
    <property type="match status" value="1"/>
</dbReference>
<dbReference type="PROSITE" id="PS50991">
    <property type="entry name" value="PYR_CT"/>
    <property type="match status" value="1"/>
</dbReference>
<protein>
    <recommendedName>
        <fullName>3-hydroxy-3-methylglutaryl-CoA lyase, cytoplasmic</fullName>
        <ecNumber>4.1.3.4</ecNumber>
    </recommendedName>
    <alternativeName>
        <fullName>3-hydroxy-3-methylglutaryl-CoA lyase-like protein 1</fullName>
    </alternativeName>
</protein>
<gene>
    <name type="primary">Hmgcll1</name>
</gene>
<accession>Q8JZS7</accession>
<feature type="initiator methionine" description="Removed">
    <location>
        <position position="1"/>
    </location>
</feature>
<feature type="chain" id="PRO_0000334670" description="3-hydroxy-3-methylglutaryl-CoA lyase, cytoplasmic">
    <location>
        <begin position="2"/>
        <end position="343"/>
    </location>
</feature>
<feature type="domain" description="Pyruvate carboxyltransferase" evidence="2">
    <location>
        <begin position="48"/>
        <end position="315"/>
    </location>
</feature>
<feature type="active site" evidence="1">
    <location>
        <position position="281"/>
    </location>
</feature>
<feature type="binding site" evidence="1">
    <location>
        <position position="56"/>
    </location>
    <ligand>
        <name>substrate</name>
    </ligand>
</feature>
<feature type="binding site" evidence="1">
    <location>
        <position position="57"/>
    </location>
    <ligand>
        <name>a divalent metal cation</name>
        <dbReference type="ChEBI" id="CHEBI:60240"/>
    </ligand>
</feature>
<feature type="binding site" evidence="1">
    <location>
        <position position="248"/>
    </location>
    <ligand>
        <name>a divalent metal cation</name>
        <dbReference type="ChEBI" id="CHEBI:60240"/>
    </ligand>
</feature>
<feature type="binding site" evidence="1">
    <location>
        <position position="250"/>
    </location>
    <ligand>
        <name>a divalent metal cation</name>
        <dbReference type="ChEBI" id="CHEBI:60240"/>
    </ligand>
</feature>
<feature type="binding site" evidence="1">
    <location>
        <position position="290"/>
    </location>
    <ligand>
        <name>a divalent metal cation</name>
        <dbReference type="ChEBI" id="CHEBI:60240"/>
    </ligand>
</feature>
<feature type="lipid moiety-binding region" description="N-myristoyl glycine" evidence="1">
    <location>
        <position position="2"/>
    </location>
</feature>
<sequence length="343" mass="36650">MGNLPSAAKHCLNYQQLLREHLWSGDSVAGALDAAQEASQLPGLPEYVKIVEVGPRDGLQNEKVIVPTDIKIELINQLSQTGLSVIEVTSFVSSRWVPQMADHAEVMRGIRQYPGVRYPVLTPNLQGFQHAVAAGATEIAVFGAASESFSKKNINCSIEESMGRFQEVISSARHMDIPVRGYVSCALGCPYEGSITPQKVTEVSKRLYGMGCYEISLGDTIGVGTPGSMKMMLESVMKEIPPGALAVHCHDTYGQALANILTALQMGINVVDSAVSGLGGCPYAKGASGNVATEDLIYMLNGMGLNTGVDLYKVMEAGEFICKAVNKTTNSKVAQASFNARLE</sequence>
<reference key="1">
    <citation type="journal article" date="2005" name="Science">
        <title>The transcriptional landscape of the mammalian genome.</title>
        <authorList>
            <person name="Carninci P."/>
            <person name="Kasukawa T."/>
            <person name="Katayama S."/>
            <person name="Gough J."/>
            <person name="Frith M.C."/>
            <person name="Maeda N."/>
            <person name="Oyama R."/>
            <person name="Ravasi T."/>
            <person name="Lenhard B."/>
            <person name="Wells C."/>
            <person name="Kodzius R."/>
            <person name="Shimokawa K."/>
            <person name="Bajic V.B."/>
            <person name="Brenner S.E."/>
            <person name="Batalov S."/>
            <person name="Forrest A.R."/>
            <person name="Zavolan M."/>
            <person name="Davis M.J."/>
            <person name="Wilming L.G."/>
            <person name="Aidinis V."/>
            <person name="Allen J.E."/>
            <person name="Ambesi-Impiombato A."/>
            <person name="Apweiler R."/>
            <person name="Aturaliya R.N."/>
            <person name="Bailey T.L."/>
            <person name="Bansal M."/>
            <person name="Baxter L."/>
            <person name="Beisel K.W."/>
            <person name="Bersano T."/>
            <person name="Bono H."/>
            <person name="Chalk A.M."/>
            <person name="Chiu K.P."/>
            <person name="Choudhary V."/>
            <person name="Christoffels A."/>
            <person name="Clutterbuck D.R."/>
            <person name="Crowe M.L."/>
            <person name="Dalla E."/>
            <person name="Dalrymple B.P."/>
            <person name="de Bono B."/>
            <person name="Della Gatta G."/>
            <person name="di Bernardo D."/>
            <person name="Down T."/>
            <person name="Engstrom P."/>
            <person name="Fagiolini M."/>
            <person name="Faulkner G."/>
            <person name="Fletcher C.F."/>
            <person name="Fukushima T."/>
            <person name="Furuno M."/>
            <person name="Futaki S."/>
            <person name="Gariboldi M."/>
            <person name="Georgii-Hemming P."/>
            <person name="Gingeras T.R."/>
            <person name="Gojobori T."/>
            <person name="Green R.E."/>
            <person name="Gustincich S."/>
            <person name="Harbers M."/>
            <person name="Hayashi Y."/>
            <person name="Hensch T.K."/>
            <person name="Hirokawa N."/>
            <person name="Hill D."/>
            <person name="Huminiecki L."/>
            <person name="Iacono M."/>
            <person name="Ikeo K."/>
            <person name="Iwama A."/>
            <person name="Ishikawa T."/>
            <person name="Jakt M."/>
            <person name="Kanapin A."/>
            <person name="Katoh M."/>
            <person name="Kawasawa Y."/>
            <person name="Kelso J."/>
            <person name="Kitamura H."/>
            <person name="Kitano H."/>
            <person name="Kollias G."/>
            <person name="Krishnan S.P."/>
            <person name="Kruger A."/>
            <person name="Kummerfeld S.K."/>
            <person name="Kurochkin I.V."/>
            <person name="Lareau L.F."/>
            <person name="Lazarevic D."/>
            <person name="Lipovich L."/>
            <person name="Liu J."/>
            <person name="Liuni S."/>
            <person name="McWilliam S."/>
            <person name="Madan Babu M."/>
            <person name="Madera M."/>
            <person name="Marchionni L."/>
            <person name="Matsuda H."/>
            <person name="Matsuzawa S."/>
            <person name="Miki H."/>
            <person name="Mignone F."/>
            <person name="Miyake S."/>
            <person name="Morris K."/>
            <person name="Mottagui-Tabar S."/>
            <person name="Mulder N."/>
            <person name="Nakano N."/>
            <person name="Nakauchi H."/>
            <person name="Ng P."/>
            <person name="Nilsson R."/>
            <person name="Nishiguchi S."/>
            <person name="Nishikawa S."/>
            <person name="Nori F."/>
            <person name="Ohara O."/>
            <person name="Okazaki Y."/>
            <person name="Orlando V."/>
            <person name="Pang K.C."/>
            <person name="Pavan W.J."/>
            <person name="Pavesi G."/>
            <person name="Pesole G."/>
            <person name="Petrovsky N."/>
            <person name="Piazza S."/>
            <person name="Reed J."/>
            <person name="Reid J.F."/>
            <person name="Ring B.Z."/>
            <person name="Ringwald M."/>
            <person name="Rost B."/>
            <person name="Ruan Y."/>
            <person name="Salzberg S.L."/>
            <person name="Sandelin A."/>
            <person name="Schneider C."/>
            <person name="Schoenbach C."/>
            <person name="Sekiguchi K."/>
            <person name="Semple C.A."/>
            <person name="Seno S."/>
            <person name="Sessa L."/>
            <person name="Sheng Y."/>
            <person name="Shibata Y."/>
            <person name="Shimada H."/>
            <person name="Shimada K."/>
            <person name="Silva D."/>
            <person name="Sinclair B."/>
            <person name="Sperling S."/>
            <person name="Stupka E."/>
            <person name="Sugiura K."/>
            <person name="Sultana R."/>
            <person name="Takenaka Y."/>
            <person name="Taki K."/>
            <person name="Tammoja K."/>
            <person name="Tan S.L."/>
            <person name="Tang S."/>
            <person name="Taylor M.S."/>
            <person name="Tegner J."/>
            <person name="Teichmann S.A."/>
            <person name="Ueda H.R."/>
            <person name="van Nimwegen E."/>
            <person name="Verardo R."/>
            <person name="Wei C.L."/>
            <person name="Yagi K."/>
            <person name="Yamanishi H."/>
            <person name="Zabarovsky E."/>
            <person name="Zhu S."/>
            <person name="Zimmer A."/>
            <person name="Hide W."/>
            <person name="Bult C."/>
            <person name="Grimmond S.M."/>
            <person name="Teasdale R.D."/>
            <person name="Liu E.T."/>
            <person name="Brusic V."/>
            <person name="Quackenbush J."/>
            <person name="Wahlestedt C."/>
            <person name="Mattick J.S."/>
            <person name="Hume D.A."/>
            <person name="Kai C."/>
            <person name="Sasaki D."/>
            <person name="Tomaru Y."/>
            <person name="Fukuda S."/>
            <person name="Kanamori-Katayama M."/>
            <person name="Suzuki M."/>
            <person name="Aoki J."/>
            <person name="Arakawa T."/>
            <person name="Iida J."/>
            <person name="Imamura K."/>
            <person name="Itoh M."/>
            <person name="Kato T."/>
            <person name="Kawaji H."/>
            <person name="Kawagashira N."/>
            <person name="Kawashima T."/>
            <person name="Kojima M."/>
            <person name="Kondo S."/>
            <person name="Konno H."/>
            <person name="Nakano K."/>
            <person name="Ninomiya N."/>
            <person name="Nishio T."/>
            <person name="Okada M."/>
            <person name="Plessy C."/>
            <person name="Shibata K."/>
            <person name="Shiraki T."/>
            <person name="Suzuki S."/>
            <person name="Tagami M."/>
            <person name="Waki K."/>
            <person name="Watahiki A."/>
            <person name="Okamura-Oho Y."/>
            <person name="Suzuki H."/>
            <person name="Kawai J."/>
            <person name="Hayashizaki Y."/>
        </authorList>
    </citation>
    <scope>NUCLEOTIDE SEQUENCE [LARGE SCALE MRNA]</scope>
    <source>
        <strain>C57BL/6J</strain>
        <tissue>Hippocampus</tissue>
    </source>
</reference>
<reference key="2">
    <citation type="journal article" date="2004" name="Genome Res.">
        <title>The status, quality, and expansion of the NIH full-length cDNA project: the Mammalian Gene Collection (MGC).</title>
        <authorList>
            <consortium name="The MGC Project Team"/>
        </authorList>
    </citation>
    <scope>NUCLEOTIDE SEQUENCE [LARGE SCALE MRNA]</scope>
    <source>
        <tissue>Eye</tissue>
    </source>
</reference>
<keyword id="KW-0963">Cytoplasm</keyword>
<keyword id="KW-0256">Endoplasmic reticulum</keyword>
<keyword id="KW-0443">Lipid metabolism</keyword>
<keyword id="KW-0449">Lipoprotein</keyword>
<keyword id="KW-0456">Lyase</keyword>
<keyword id="KW-0472">Membrane</keyword>
<keyword id="KW-0479">Metal-binding</keyword>
<keyword id="KW-0519">Myristate</keyword>
<keyword id="KW-1185">Reference proteome</keyword>
<evidence type="ECO:0000250" key="1"/>
<evidence type="ECO:0000255" key="2">
    <source>
        <dbReference type="PROSITE-ProRule" id="PRU01151"/>
    </source>
</evidence>
<evidence type="ECO:0000305" key="3"/>
<proteinExistence type="evidence at transcript level"/>
<organism>
    <name type="scientific">Mus musculus</name>
    <name type="common">Mouse</name>
    <dbReference type="NCBI Taxonomy" id="10090"/>
    <lineage>
        <taxon>Eukaryota</taxon>
        <taxon>Metazoa</taxon>
        <taxon>Chordata</taxon>
        <taxon>Craniata</taxon>
        <taxon>Vertebrata</taxon>
        <taxon>Euteleostomi</taxon>
        <taxon>Mammalia</taxon>
        <taxon>Eutheria</taxon>
        <taxon>Euarchontoglires</taxon>
        <taxon>Glires</taxon>
        <taxon>Rodentia</taxon>
        <taxon>Myomorpha</taxon>
        <taxon>Muroidea</taxon>
        <taxon>Muridae</taxon>
        <taxon>Murinae</taxon>
        <taxon>Mus</taxon>
        <taxon>Mus</taxon>
    </lineage>
</organism>
<name>HMGC2_MOUSE</name>